<reference key="1">
    <citation type="submission" date="2006-10" db="EMBL/GenBank/DDBJ databases">
        <title>Complete sequence of Methanosaeta thermophila PT.</title>
        <authorList>
            <consortium name="US DOE Joint Genome Institute"/>
            <person name="Copeland A."/>
            <person name="Lucas S."/>
            <person name="Lapidus A."/>
            <person name="Barry K."/>
            <person name="Detter J.C."/>
            <person name="Glavina del Rio T."/>
            <person name="Hammon N."/>
            <person name="Israni S."/>
            <person name="Pitluck S."/>
            <person name="Chain P."/>
            <person name="Malfatti S."/>
            <person name="Shin M."/>
            <person name="Vergez L."/>
            <person name="Schmutz J."/>
            <person name="Larimer F."/>
            <person name="Land M."/>
            <person name="Hauser L."/>
            <person name="Kyrpides N."/>
            <person name="Kim E."/>
            <person name="Smith K.S."/>
            <person name="Ingram-Smith C."/>
            <person name="Richardson P."/>
        </authorList>
    </citation>
    <scope>NUCLEOTIDE SEQUENCE [LARGE SCALE GENOMIC DNA]</scope>
    <source>
        <strain>DSM 6194 / JCM 14653 / NBRC 101360 / PT</strain>
    </source>
</reference>
<dbReference type="EC" id="4.2.1.11" evidence="1"/>
<dbReference type="EMBL" id="CP000477">
    <property type="protein sequence ID" value="ABK14622.1"/>
    <property type="molecule type" value="Genomic_DNA"/>
</dbReference>
<dbReference type="RefSeq" id="WP_011696018.1">
    <property type="nucleotide sequence ID" value="NC_008553.1"/>
</dbReference>
<dbReference type="SMR" id="A0B7E8"/>
<dbReference type="STRING" id="349307.Mthe_0833"/>
<dbReference type="GeneID" id="4462976"/>
<dbReference type="KEGG" id="mtp:Mthe_0833"/>
<dbReference type="HOGENOM" id="CLU_031223_2_1_2"/>
<dbReference type="OrthoDB" id="8680at2157"/>
<dbReference type="UniPathway" id="UPA00109">
    <property type="reaction ID" value="UER00187"/>
</dbReference>
<dbReference type="Proteomes" id="UP000000674">
    <property type="component" value="Chromosome"/>
</dbReference>
<dbReference type="GO" id="GO:0009986">
    <property type="term" value="C:cell surface"/>
    <property type="evidence" value="ECO:0007669"/>
    <property type="project" value="UniProtKB-SubCell"/>
</dbReference>
<dbReference type="GO" id="GO:0005576">
    <property type="term" value="C:extracellular region"/>
    <property type="evidence" value="ECO:0007669"/>
    <property type="project" value="UniProtKB-SubCell"/>
</dbReference>
<dbReference type="GO" id="GO:0000015">
    <property type="term" value="C:phosphopyruvate hydratase complex"/>
    <property type="evidence" value="ECO:0007669"/>
    <property type="project" value="InterPro"/>
</dbReference>
<dbReference type="GO" id="GO:0000287">
    <property type="term" value="F:magnesium ion binding"/>
    <property type="evidence" value="ECO:0007669"/>
    <property type="project" value="UniProtKB-UniRule"/>
</dbReference>
<dbReference type="GO" id="GO:0004634">
    <property type="term" value="F:phosphopyruvate hydratase activity"/>
    <property type="evidence" value="ECO:0007669"/>
    <property type="project" value="UniProtKB-UniRule"/>
</dbReference>
<dbReference type="GO" id="GO:0006096">
    <property type="term" value="P:glycolytic process"/>
    <property type="evidence" value="ECO:0007669"/>
    <property type="project" value="UniProtKB-UniRule"/>
</dbReference>
<dbReference type="CDD" id="cd03313">
    <property type="entry name" value="enolase"/>
    <property type="match status" value="1"/>
</dbReference>
<dbReference type="FunFam" id="3.30.390.10:FF:000001">
    <property type="entry name" value="Enolase"/>
    <property type="match status" value="1"/>
</dbReference>
<dbReference type="Gene3D" id="3.20.20.120">
    <property type="entry name" value="Enolase-like C-terminal domain"/>
    <property type="match status" value="1"/>
</dbReference>
<dbReference type="Gene3D" id="3.30.390.10">
    <property type="entry name" value="Enolase-like, N-terminal domain"/>
    <property type="match status" value="1"/>
</dbReference>
<dbReference type="HAMAP" id="MF_00318">
    <property type="entry name" value="Enolase"/>
    <property type="match status" value="1"/>
</dbReference>
<dbReference type="InterPro" id="IPR000941">
    <property type="entry name" value="Enolase"/>
</dbReference>
<dbReference type="InterPro" id="IPR036849">
    <property type="entry name" value="Enolase-like_C_sf"/>
</dbReference>
<dbReference type="InterPro" id="IPR029017">
    <property type="entry name" value="Enolase-like_N"/>
</dbReference>
<dbReference type="InterPro" id="IPR020810">
    <property type="entry name" value="Enolase_C"/>
</dbReference>
<dbReference type="InterPro" id="IPR020809">
    <property type="entry name" value="Enolase_CS"/>
</dbReference>
<dbReference type="InterPro" id="IPR020811">
    <property type="entry name" value="Enolase_N"/>
</dbReference>
<dbReference type="NCBIfam" id="TIGR01060">
    <property type="entry name" value="eno"/>
    <property type="match status" value="1"/>
</dbReference>
<dbReference type="PANTHER" id="PTHR11902">
    <property type="entry name" value="ENOLASE"/>
    <property type="match status" value="1"/>
</dbReference>
<dbReference type="PANTHER" id="PTHR11902:SF1">
    <property type="entry name" value="ENOLASE"/>
    <property type="match status" value="1"/>
</dbReference>
<dbReference type="Pfam" id="PF00113">
    <property type="entry name" value="Enolase_C"/>
    <property type="match status" value="1"/>
</dbReference>
<dbReference type="Pfam" id="PF03952">
    <property type="entry name" value="Enolase_N"/>
    <property type="match status" value="1"/>
</dbReference>
<dbReference type="PIRSF" id="PIRSF001400">
    <property type="entry name" value="Enolase"/>
    <property type="match status" value="1"/>
</dbReference>
<dbReference type="PRINTS" id="PR00148">
    <property type="entry name" value="ENOLASE"/>
</dbReference>
<dbReference type="SFLD" id="SFLDF00002">
    <property type="entry name" value="enolase"/>
    <property type="match status" value="1"/>
</dbReference>
<dbReference type="SFLD" id="SFLDG00178">
    <property type="entry name" value="enolase"/>
    <property type="match status" value="1"/>
</dbReference>
<dbReference type="SMART" id="SM01192">
    <property type="entry name" value="Enolase_C"/>
    <property type="match status" value="1"/>
</dbReference>
<dbReference type="SMART" id="SM01193">
    <property type="entry name" value="Enolase_N"/>
    <property type="match status" value="1"/>
</dbReference>
<dbReference type="SUPFAM" id="SSF51604">
    <property type="entry name" value="Enolase C-terminal domain-like"/>
    <property type="match status" value="1"/>
</dbReference>
<dbReference type="SUPFAM" id="SSF54826">
    <property type="entry name" value="Enolase N-terminal domain-like"/>
    <property type="match status" value="1"/>
</dbReference>
<dbReference type="PROSITE" id="PS00164">
    <property type="entry name" value="ENOLASE"/>
    <property type="match status" value="1"/>
</dbReference>
<gene>
    <name evidence="1" type="primary">eno</name>
    <name type="ordered locus">Mthe_0833</name>
</gene>
<protein>
    <recommendedName>
        <fullName evidence="1">Enolase</fullName>
        <ecNumber evidence="1">4.2.1.11</ecNumber>
    </recommendedName>
    <alternativeName>
        <fullName evidence="1">2-phospho-D-glycerate hydro-lyase</fullName>
    </alternativeName>
    <alternativeName>
        <fullName evidence="1">2-phosphoglycerate dehydratase</fullName>
    </alternativeName>
</protein>
<proteinExistence type="inferred from homology"/>
<comment type="function">
    <text evidence="1">Catalyzes the reversible conversion of 2-phosphoglycerate (2-PG) into phosphoenolpyruvate (PEP). It is essential for the degradation of carbohydrates via glycolysis.</text>
</comment>
<comment type="catalytic activity">
    <reaction evidence="1">
        <text>(2R)-2-phosphoglycerate = phosphoenolpyruvate + H2O</text>
        <dbReference type="Rhea" id="RHEA:10164"/>
        <dbReference type="ChEBI" id="CHEBI:15377"/>
        <dbReference type="ChEBI" id="CHEBI:58289"/>
        <dbReference type="ChEBI" id="CHEBI:58702"/>
        <dbReference type="EC" id="4.2.1.11"/>
    </reaction>
</comment>
<comment type="cofactor">
    <cofactor evidence="1">
        <name>Mg(2+)</name>
        <dbReference type="ChEBI" id="CHEBI:18420"/>
    </cofactor>
    <text evidence="1">Binds a second Mg(2+) ion via substrate during catalysis.</text>
</comment>
<comment type="pathway">
    <text evidence="1">Carbohydrate degradation; glycolysis; pyruvate from D-glyceraldehyde 3-phosphate: step 4/5.</text>
</comment>
<comment type="subcellular location">
    <subcellularLocation>
        <location evidence="1">Cytoplasm</location>
    </subcellularLocation>
    <subcellularLocation>
        <location evidence="1">Secreted</location>
    </subcellularLocation>
    <subcellularLocation>
        <location evidence="1">Cell surface</location>
    </subcellularLocation>
    <text evidence="1">Fractions of enolase are present in both the cytoplasm and on the cell surface.</text>
</comment>
<comment type="similarity">
    <text evidence="1">Belongs to the enolase family.</text>
</comment>
<sequence>MSLEIEKIHAREILDSRGNPTVEVDVWTCCGFGRAAVPSGASTGTYEALELRDGGDRYDGKGVLKAVRNVNEVIGPKLIGMDVIDQRGVDQIMIEMDGTPNKSNLGANAILGVSLAVAKAAASSLGMPLYRYLGGVSATRLPVPSLNVLNGGKHAGNDLSIQEFMIEPWGADSFSEALRMAAETYHALGRILRGKYGNVATNVGFEGGYAPPISKTRDALDAIMAALDVTGYTEEIKLGLDSAASSFYLDGGYSVDDNRLSPGELIDFYVELVKTYPIVLIEDPFEENAFEEFAELTKKLPDTIIVGDDLYVTNMARIEKGIRMRSTNALLLKLNQIGTVSEAFDAATLAYRNSFKVMVSHRSAETEDSALADVSVAIGAELIKTGAPARSERNAKYNQLLRIQEALGSSASYAGRRRWS</sequence>
<evidence type="ECO:0000255" key="1">
    <source>
        <dbReference type="HAMAP-Rule" id="MF_00318"/>
    </source>
</evidence>
<name>ENO_METTP</name>
<keyword id="KW-0963">Cytoplasm</keyword>
<keyword id="KW-0324">Glycolysis</keyword>
<keyword id="KW-0456">Lyase</keyword>
<keyword id="KW-0460">Magnesium</keyword>
<keyword id="KW-0479">Metal-binding</keyword>
<keyword id="KW-1185">Reference proteome</keyword>
<keyword id="KW-0964">Secreted</keyword>
<feature type="chain" id="PRO_0000280882" description="Enolase">
    <location>
        <begin position="1"/>
        <end position="420"/>
    </location>
</feature>
<feature type="active site" description="Proton donor" evidence="1">
    <location>
        <position position="206"/>
    </location>
</feature>
<feature type="active site" description="Proton acceptor" evidence="1">
    <location>
        <position position="333"/>
    </location>
</feature>
<feature type="binding site" evidence="1">
    <location>
        <position position="162"/>
    </location>
    <ligand>
        <name>(2R)-2-phosphoglycerate</name>
        <dbReference type="ChEBI" id="CHEBI:58289"/>
    </ligand>
</feature>
<feature type="binding site" evidence="1">
    <location>
        <position position="241"/>
    </location>
    <ligand>
        <name>Mg(2+)</name>
        <dbReference type="ChEBI" id="CHEBI:18420"/>
    </ligand>
</feature>
<feature type="binding site" evidence="1">
    <location>
        <position position="282"/>
    </location>
    <ligand>
        <name>Mg(2+)</name>
        <dbReference type="ChEBI" id="CHEBI:18420"/>
    </ligand>
</feature>
<feature type="binding site" evidence="1">
    <location>
        <position position="308"/>
    </location>
    <ligand>
        <name>Mg(2+)</name>
        <dbReference type="ChEBI" id="CHEBI:18420"/>
    </ligand>
</feature>
<feature type="binding site" evidence="1">
    <location>
        <position position="333"/>
    </location>
    <ligand>
        <name>(2R)-2-phosphoglycerate</name>
        <dbReference type="ChEBI" id="CHEBI:58289"/>
    </ligand>
</feature>
<feature type="binding site" evidence="1">
    <location>
        <position position="362"/>
    </location>
    <ligand>
        <name>(2R)-2-phosphoglycerate</name>
        <dbReference type="ChEBI" id="CHEBI:58289"/>
    </ligand>
</feature>
<feature type="binding site" evidence="1">
    <location>
        <position position="363"/>
    </location>
    <ligand>
        <name>(2R)-2-phosphoglycerate</name>
        <dbReference type="ChEBI" id="CHEBI:58289"/>
    </ligand>
</feature>
<feature type="binding site" evidence="1">
    <location>
        <position position="384"/>
    </location>
    <ligand>
        <name>(2R)-2-phosphoglycerate</name>
        <dbReference type="ChEBI" id="CHEBI:58289"/>
    </ligand>
</feature>
<organism>
    <name type="scientific">Methanothrix thermoacetophila (strain DSM 6194 / JCM 14653 / NBRC 101360 / PT)</name>
    <name type="common">Methanosaeta thermophila</name>
    <dbReference type="NCBI Taxonomy" id="349307"/>
    <lineage>
        <taxon>Archaea</taxon>
        <taxon>Methanobacteriati</taxon>
        <taxon>Methanobacteriota</taxon>
        <taxon>Stenosarchaea group</taxon>
        <taxon>Methanomicrobia</taxon>
        <taxon>Methanotrichales</taxon>
        <taxon>Methanotrichaceae</taxon>
        <taxon>Methanothrix</taxon>
    </lineage>
</organism>
<accession>A0B7E8</accession>